<comment type="function">
    <text evidence="1">Essential for recycling GMP and indirectly, cGMP.</text>
</comment>
<comment type="catalytic activity">
    <reaction evidence="1">
        <text>GMP + ATP = GDP + ADP</text>
        <dbReference type="Rhea" id="RHEA:20780"/>
        <dbReference type="ChEBI" id="CHEBI:30616"/>
        <dbReference type="ChEBI" id="CHEBI:58115"/>
        <dbReference type="ChEBI" id="CHEBI:58189"/>
        <dbReference type="ChEBI" id="CHEBI:456216"/>
        <dbReference type="EC" id="2.7.4.8"/>
    </reaction>
</comment>
<comment type="subcellular location">
    <subcellularLocation>
        <location evidence="1">Cytoplasm</location>
    </subcellularLocation>
</comment>
<comment type="similarity">
    <text evidence="1">Belongs to the guanylate kinase family.</text>
</comment>
<proteinExistence type="inferred from homology"/>
<keyword id="KW-0067">ATP-binding</keyword>
<keyword id="KW-0963">Cytoplasm</keyword>
<keyword id="KW-0418">Kinase</keyword>
<keyword id="KW-0547">Nucleotide-binding</keyword>
<keyword id="KW-0808">Transferase</keyword>
<reference key="1">
    <citation type="journal article" date="2005" name="Proc. Natl. Acad. Sci. U.S.A.">
        <title>The psychrophilic lifestyle as revealed by the genome sequence of Colwellia psychrerythraea 34H through genomic and proteomic analyses.</title>
        <authorList>
            <person name="Methe B.A."/>
            <person name="Nelson K.E."/>
            <person name="Deming J.W."/>
            <person name="Momen B."/>
            <person name="Melamud E."/>
            <person name="Zhang X."/>
            <person name="Moult J."/>
            <person name="Madupu R."/>
            <person name="Nelson W.C."/>
            <person name="Dodson R.J."/>
            <person name="Brinkac L.M."/>
            <person name="Daugherty S.C."/>
            <person name="Durkin A.S."/>
            <person name="DeBoy R.T."/>
            <person name="Kolonay J.F."/>
            <person name="Sullivan S.A."/>
            <person name="Zhou L."/>
            <person name="Davidsen T.M."/>
            <person name="Wu M."/>
            <person name="Huston A.L."/>
            <person name="Lewis M."/>
            <person name="Weaver B."/>
            <person name="Weidman J.F."/>
            <person name="Khouri H."/>
            <person name="Utterback T.R."/>
            <person name="Feldblyum T.V."/>
            <person name="Fraser C.M."/>
        </authorList>
    </citation>
    <scope>NUCLEOTIDE SEQUENCE [LARGE SCALE GENOMIC DNA]</scope>
    <source>
        <strain>34H / ATCC BAA-681</strain>
    </source>
</reference>
<name>KGUA_COLP3</name>
<evidence type="ECO:0000255" key="1">
    <source>
        <dbReference type="HAMAP-Rule" id="MF_00328"/>
    </source>
</evidence>
<sequence length="218" mass="24280">MIVPGNLFILSAPSGAGKSSLINALLKPDNQASARAMQVSISHTTRDARPGENNGEHYHFVSVEEFKKQISLNAFYEYAEVFGNYYGTSEAAIDAQLSQGIDVFLDIDWQGAQQVRMKKPGVTTIFISPPSKEELESRLRGRGQDSDEVIASRMAQAQAECSHYNEFDYVIVNDDFEQALLDLTTIVNNQRLKCRQQSIAQQSLFSKLLNIEAVEPTE</sequence>
<gene>
    <name evidence="1" type="primary">gmk</name>
    <name type="ordered locus">CPS_4971</name>
</gene>
<dbReference type="EC" id="2.7.4.8" evidence="1"/>
<dbReference type="EMBL" id="CP000083">
    <property type="protein sequence ID" value="AAZ24463.1"/>
    <property type="molecule type" value="Genomic_DNA"/>
</dbReference>
<dbReference type="SMR" id="Q47UB3"/>
<dbReference type="STRING" id="167879.CPS_4971"/>
<dbReference type="KEGG" id="cps:CPS_4971"/>
<dbReference type="eggNOG" id="COG0194">
    <property type="taxonomic scope" value="Bacteria"/>
</dbReference>
<dbReference type="HOGENOM" id="CLU_001715_1_0_6"/>
<dbReference type="Proteomes" id="UP000000547">
    <property type="component" value="Chromosome"/>
</dbReference>
<dbReference type="GO" id="GO:0005829">
    <property type="term" value="C:cytosol"/>
    <property type="evidence" value="ECO:0007669"/>
    <property type="project" value="TreeGrafter"/>
</dbReference>
<dbReference type="GO" id="GO:0005524">
    <property type="term" value="F:ATP binding"/>
    <property type="evidence" value="ECO:0007669"/>
    <property type="project" value="UniProtKB-UniRule"/>
</dbReference>
<dbReference type="GO" id="GO:0004385">
    <property type="term" value="F:guanylate kinase activity"/>
    <property type="evidence" value="ECO:0007669"/>
    <property type="project" value="UniProtKB-UniRule"/>
</dbReference>
<dbReference type="CDD" id="cd00071">
    <property type="entry name" value="GMPK"/>
    <property type="match status" value="1"/>
</dbReference>
<dbReference type="FunFam" id="3.40.50.300:FF:000084">
    <property type="entry name" value="Guanylate kinase"/>
    <property type="match status" value="1"/>
</dbReference>
<dbReference type="FunFam" id="3.30.63.10:FF:000002">
    <property type="entry name" value="Guanylate kinase 1"/>
    <property type="match status" value="1"/>
</dbReference>
<dbReference type="Gene3D" id="3.30.63.10">
    <property type="entry name" value="Guanylate Kinase phosphate binding domain"/>
    <property type="match status" value="1"/>
</dbReference>
<dbReference type="Gene3D" id="3.40.50.300">
    <property type="entry name" value="P-loop containing nucleotide triphosphate hydrolases"/>
    <property type="match status" value="1"/>
</dbReference>
<dbReference type="HAMAP" id="MF_00328">
    <property type="entry name" value="Guanylate_kinase"/>
    <property type="match status" value="1"/>
</dbReference>
<dbReference type="InterPro" id="IPR008145">
    <property type="entry name" value="GK/Ca_channel_bsu"/>
</dbReference>
<dbReference type="InterPro" id="IPR008144">
    <property type="entry name" value="Guanylate_kin-like_dom"/>
</dbReference>
<dbReference type="InterPro" id="IPR017665">
    <property type="entry name" value="Guanylate_kinase"/>
</dbReference>
<dbReference type="InterPro" id="IPR020590">
    <property type="entry name" value="Guanylate_kinase_CS"/>
</dbReference>
<dbReference type="InterPro" id="IPR027417">
    <property type="entry name" value="P-loop_NTPase"/>
</dbReference>
<dbReference type="NCBIfam" id="TIGR03263">
    <property type="entry name" value="guanyl_kin"/>
    <property type="match status" value="1"/>
</dbReference>
<dbReference type="PANTHER" id="PTHR23117:SF13">
    <property type="entry name" value="GUANYLATE KINASE"/>
    <property type="match status" value="1"/>
</dbReference>
<dbReference type="PANTHER" id="PTHR23117">
    <property type="entry name" value="GUANYLATE KINASE-RELATED"/>
    <property type="match status" value="1"/>
</dbReference>
<dbReference type="Pfam" id="PF00625">
    <property type="entry name" value="Guanylate_kin"/>
    <property type="match status" value="1"/>
</dbReference>
<dbReference type="SMART" id="SM00072">
    <property type="entry name" value="GuKc"/>
    <property type="match status" value="1"/>
</dbReference>
<dbReference type="SUPFAM" id="SSF52540">
    <property type="entry name" value="P-loop containing nucleoside triphosphate hydrolases"/>
    <property type="match status" value="1"/>
</dbReference>
<dbReference type="PROSITE" id="PS00856">
    <property type="entry name" value="GUANYLATE_KINASE_1"/>
    <property type="match status" value="1"/>
</dbReference>
<dbReference type="PROSITE" id="PS50052">
    <property type="entry name" value="GUANYLATE_KINASE_2"/>
    <property type="match status" value="1"/>
</dbReference>
<feature type="chain" id="PRO_0000266310" description="Guanylate kinase">
    <location>
        <begin position="1"/>
        <end position="218"/>
    </location>
</feature>
<feature type="domain" description="Guanylate kinase-like" evidence="1">
    <location>
        <begin position="5"/>
        <end position="188"/>
    </location>
</feature>
<feature type="binding site" evidence="1">
    <location>
        <begin position="12"/>
        <end position="19"/>
    </location>
    <ligand>
        <name>ATP</name>
        <dbReference type="ChEBI" id="CHEBI:30616"/>
    </ligand>
</feature>
<organism>
    <name type="scientific">Colwellia psychrerythraea (strain 34H / ATCC BAA-681)</name>
    <name type="common">Vibrio psychroerythus</name>
    <dbReference type="NCBI Taxonomy" id="167879"/>
    <lineage>
        <taxon>Bacteria</taxon>
        <taxon>Pseudomonadati</taxon>
        <taxon>Pseudomonadota</taxon>
        <taxon>Gammaproteobacteria</taxon>
        <taxon>Alteromonadales</taxon>
        <taxon>Colwelliaceae</taxon>
        <taxon>Colwellia</taxon>
    </lineage>
</organism>
<accession>Q47UB3</accession>
<protein>
    <recommendedName>
        <fullName evidence="1">Guanylate kinase</fullName>
        <ecNumber evidence="1">2.7.4.8</ecNumber>
    </recommendedName>
    <alternativeName>
        <fullName evidence="1">GMP kinase</fullName>
    </alternativeName>
</protein>